<reference evidence="8" key="1">
    <citation type="journal article" date="2002" name="Nature">
        <title>Genome sequence of the human malaria parasite Plasmodium falciparum.</title>
        <authorList>
            <person name="Gardner M.J."/>
            <person name="Hall N."/>
            <person name="Fung E."/>
            <person name="White O."/>
            <person name="Berriman M."/>
            <person name="Hyman R.W."/>
            <person name="Carlton J.M."/>
            <person name="Pain A."/>
            <person name="Nelson K.E."/>
            <person name="Bowman S."/>
            <person name="Paulsen I.T."/>
            <person name="James K.D."/>
            <person name="Eisen J.A."/>
            <person name="Rutherford K.M."/>
            <person name="Salzberg S.L."/>
            <person name="Craig A."/>
            <person name="Kyes S."/>
            <person name="Chan M.-S."/>
            <person name="Nene V."/>
            <person name="Shallom S.J."/>
            <person name="Suh B."/>
            <person name="Peterson J."/>
            <person name="Angiuoli S."/>
            <person name="Pertea M."/>
            <person name="Allen J."/>
            <person name="Selengut J."/>
            <person name="Haft D."/>
            <person name="Mather M.W."/>
            <person name="Vaidya A.B."/>
            <person name="Martin D.M.A."/>
            <person name="Fairlamb A.H."/>
            <person name="Fraunholz M.J."/>
            <person name="Roos D.S."/>
            <person name="Ralph S.A."/>
            <person name="McFadden G.I."/>
            <person name="Cummings L.M."/>
            <person name="Subramanian G.M."/>
            <person name="Mungall C."/>
            <person name="Venter J.C."/>
            <person name="Carucci D.J."/>
            <person name="Hoffman S.L."/>
            <person name="Newbold C."/>
            <person name="Davis R.W."/>
            <person name="Fraser C.M."/>
            <person name="Barrell B.G."/>
        </authorList>
    </citation>
    <scope>NUCLEOTIDE SEQUENCE [LARGE SCALE GENOMIC DNA]</scope>
    <source>
        <strain evidence="8">3D7</strain>
    </source>
</reference>
<reference evidence="8" key="2">
    <citation type="journal article" date="2002" name="Nature">
        <title>Sequence of Plasmodium falciparum chromosomes 1, 3-9 and 13.</title>
        <authorList>
            <person name="Hall N."/>
            <person name="Pain A."/>
            <person name="Berriman M."/>
            <person name="Churcher C.M."/>
            <person name="Harris B."/>
            <person name="Harris D."/>
            <person name="Mungall K.L."/>
            <person name="Bowman S."/>
            <person name="Atkin R."/>
            <person name="Baker S."/>
            <person name="Barron A."/>
            <person name="Brooks K."/>
            <person name="Buckee C.O."/>
            <person name="Burrows C."/>
            <person name="Cherevach I."/>
            <person name="Chillingworth C."/>
            <person name="Chillingworth T."/>
            <person name="Christodoulou Z."/>
            <person name="Clark L."/>
            <person name="Clark R."/>
            <person name="Corton C."/>
            <person name="Cronin A."/>
            <person name="Davies R.M."/>
            <person name="Davis P."/>
            <person name="Dear P."/>
            <person name="Dearden F."/>
            <person name="Doggett J."/>
            <person name="Feltwell T."/>
            <person name="Goble A."/>
            <person name="Goodhead I."/>
            <person name="Gwilliam R."/>
            <person name="Hamlin N."/>
            <person name="Hance Z."/>
            <person name="Harper D."/>
            <person name="Hauser H."/>
            <person name="Hornsby T."/>
            <person name="Holroyd S."/>
            <person name="Horrocks P."/>
            <person name="Humphray S."/>
            <person name="Jagels K."/>
            <person name="James K.D."/>
            <person name="Johnson D."/>
            <person name="Kerhornou A."/>
            <person name="Knights A."/>
            <person name="Konfortov B."/>
            <person name="Kyes S."/>
            <person name="Larke N."/>
            <person name="Lawson D."/>
            <person name="Lennard N."/>
            <person name="Line A."/>
            <person name="Maddison M."/>
            <person name="Mclean J."/>
            <person name="Mooney P."/>
            <person name="Moule S."/>
            <person name="Murphy L."/>
            <person name="Oliver K."/>
            <person name="Ormond D."/>
            <person name="Price C."/>
            <person name="Quail M.A."/>
            <person name="Rabbinowitsch E."/>
            <person name="Rajandream M.A."/>
            <person name="Rutter S."/>
            <person name="Rutherford K.M."/>
            <person name="Sanders M."/>
            <person name="Simmonds M."/>
            <person name="Seeger K."/>
            <person name="Sharp S."/>
            <person name="Smith R."/>
            <person name="Squares R."/>
            <person name="Squares S."/>
            <person name="Stevens K."/>
            <person name="Taylor K."/>
            <person name="Tivey A."/>
            <person name="Unwin L."/>
            <person name="Whitehead S."/>
            <person name="Woodward J.R."/>
            <person name="Sulston J.E."/>
            <person name="Craig A."/>
            <person name="Newbold C."/>
            <person name="Barrell B.G."/>
        </authorList>
    </citation>
    <scope>NUCLEOTIDE SEQUENCE [LARGE SCALE GENOMIC DNA]</scope>
    <source>
        <strain evidence="8">3D7</strain>
    </source>
</reference>
<reference evidence="6" key="3">
    <citation type="journal article" date="2017" name="FEBS J.">
        <title>[Fe-S] cluster assembly in the apicoplast and its indispensability in mosquito stages of the malaria parasite.</title>
        <authorList>
            <person name="Charan M."/>
            <person name="Choudhary H.H."/>
            <person name="Singh N."/>
            <person name="Sadik M."/>
            <person name="Siddiqi M.I."/>
            <person name="Mishra S."/>
            <person name="Habib S."/>
        </authorList>
    </citation>
    <scope>FUNCTION</scope>
    <scope>SUBUNIT</scope>
    <source>
        <strain evidence="5">3D7</strain>
    </source>
</reference>
<keyword id="KW-0004">4Fe-4S</keyword>
<keyword id="KW-0933">Apicoplast</keyword>
<keyword id="KW-0408">Iron</keyword>
<keyword id="KW-0411">Iron-sulfur</keyword>
<keyword id="KW-0479">Metal-binding</keyword>
<keyword id="KW-0934">Plastid</keyword>
<keyword id="KW-1185">Reference proteome</keyword>
<keyword id="KW-0732">Signal</keyword>
<dbReference type="EMBL" id="AL844504">
    <property type="protein sequence ID" value="CAD51591.1"/>
    <property type="molecule type" value="Genomic_DNA"/>
</dbReference>
<dbReference type="RefSeq" id="XP_001351784.1">
    <property type="nucleotide sequence ID" value="XM_001351748.1"/>
</dbReference>
<dbReference type="SMR" id="Q8I3N6"/>
<dbReference type="FunCoup" id="Q8I3N6">
    <property type="interactions" value="41"/>
</dbReference>
<dbReference type="STRING" id="36329.Q8I3N6"/>
<dbReference type="PaxDb" id="5833-PFE1135w"/>
<dbReference type="EnsemblProtists" id="CAD51591">
    <property type="protein sequence ID" value="CAD51591"/>
    <property type="gene ID" value="PF3D7_0522700"/>
</dbReference>
<dbReference type="GeneID" id="813042"/>
<dbReference type="KEGG" id="pfa:PF3D7_0522700"/>
<dbReference type="VEuPathDB" id="PlasmoDB:PF3D7_0522700"/>
<dbReference type="HOGENOM" id="CLU_069054_3_0_1"/>
<dbReference type="InParanoid" id="Q8I3N6"/>
<dbReference type="OMA" id="INNNVMD"/>
<dbReference type="OrthoDB" id="333486at2759"/>
<dbReference type="PhylomeDB" id="Q8I3N6"/>
<dbReference type="UniPathway" id="UPA00266"/>
<dbReference type="Proteomes" id="UP000001450">
    <property type="component" value="Chromosome 5"/>
</dbReference>
<dbReference type="GO" id="GO:0020011">
    <property type="term" value="C:apicoplast"/>
    <property type="evidence" value="ECO:0007669"/>
    <property type="project" value="UniProtKB-SubCell"/>
</dbReference>
<dbReference type="GO" id="GO:0005737">
    <property type="term" value="C:cytoplasm"/>
    <property type="evidence" value="ECO:0000318"/>
    <property type="project" value="GO_Central"/>
</dbReference>
<dbReference type="GO" id="GO:0051537">
    <property type="term" value="F:2 iron, 2 sulfur cluster binding"/>
    <property type="evidence" value="ECO:0000318"/>
    <property type="project" value="GO_Central"/>
</dbReference>
<dbReference type="GO" id="GO:0051539">
    <property type="term" value="F:4 iron, 4 sulfur cluster binding"/>
    <property type="evidence" value="ECO:0007669"/>
    <property type="project" value="UniProtKB-KW"/>
</dbReference>
<dbReference type="GO" id="GO:0046872">
    <property type="term" value="F:metal ion binding"/>
    <property type="evidence" value="ECO:0007669"/>
    <property type="project" value="UniProtKB-KW"/>
</dbReference>
<dbReference type="GO" id="GO:0016226">
    <property type="term" value="P:iron-sulfur cluster assembly"/>
    <property type="evidence" value="ECO:0000318"/>
    <property type="project" value="GO_Central"/>
</dbReference>
<dbReference type="Gene3D" id="2.60.300.12">
    <property type="entry name" value="HesB-like domain"/>
    <property type="match status" value="1"/>
</dbReference>
<dbReference type="InterPro" id="IPR000361">
    <property type="entry name" value="FeS_biogenesis"/>
</dbReference>
<dbReference type="InterPro" id="IPR016092">
    <property type="entry name" value="FeS_cluster_insertion"/>
</dbReference>
<dbReference type="InterPro" id="IPR017870">
    <property type="entry name" value="FeS_cluster_insertion_CS"/>
</dbReference>
<dbReference type="InterPro" id="IPR035903">
    <property type="entry name" value="HesB-like_dom_sf"/>
</dbReference>
<dbReference type="InterPro" id="IPR031108">
    <property type="entry name" value="ISCA_plant_cyanobact"/>
</dbReference>
<dbReference type="NCBIfam" id="TIGR00049">
    <property type="entry name" value="iron-sulfur cluster assembly accessory protein"/>
    <property type="match status" value="1"/>
</dbReference>
<dbReference type="PANTHER" id="PTHR47265">
    <property type="entry name" value="IRON-SULFUR ASSEMBLY PROTEIN ISCA, CHLOROPLASTIC"/>
    <property type="match status" value="1"/>
</dbReference>
<dbReference type="PANTHER" id="PTHR47265:SF1">
    <property type="entry name" value="IRON-SULFUR ASSEMBLY PROTEIN ISCA, CHLOROPLASTIC"/>
    <property type="match status" value="1"/>
</dbReference>
<dbReference type="Pfam" id="PF01521">
    <property type="entry name" value="Fe-S_biosyn"/>
    <property type="match status" value="1"/>
</dbReference>
<dbReference type="SUPFAM" id="SSF89360">
    <property type="entry name" value="HesB-like domain"/>
    <property type="match status" value="1"/>
</dbReference>
<dbReference type="PROSITE" id="PS01152">
    <property type="entry name" value="HESB"/>
    <property type="match status" value="1"/>
</dbReference>
<proteinExistence type="evidence at protein level"/>
<comment type="function">
    <text evidence="4">Participates in the sulfur mobilization (SUF) pathway for iron-sulfur (Fe-S) cluster biogenesis (PubMed:28695709). Involved in the pre-assembly of [4Fe-4S] clusters and their transfer to target proteins (PubMed:28695709).</text>
</comment>
<comment type="pathway">
    <text evidence="6">Cofactor biosynthesis; iron-sulfur cluster biosynthesis.</text>
</comment>
<comment type="subunit">
    <text evidence="4">Homodimer (PubMed:28695709). Homotetramer formation is observed in vitro (PubMed:28695709).</text>
</comment>
<comment type="subcellular location">
    <subcellularLocation>
        <location evidence="1">Plastid</location>
        <location evidence="1">Apicoplast</location>
    </subcellularLocation>
</comment>
<comment type="similarity">
    <text evidence="6">Belongs to the HesB/IscA family.</text>
</comment>
<accession>Q8I3N6</accession>
<evidence type="ECO:0000250" key="1">
    <source>
        <dbReference type="UniProtKB" id="A0A509ANY8"/>
    </source>
</evidence>
<evidence type="ECO:0000250" key="2">
    <source>
        <dbReference type="UniProtKB" id="P77667"/>
    </source>
</evidence>
<evidence type="ECO:0000255" key="3"/>
<evidence type="ECO:0000269" key="4">
    <source>
    </source>
</evidence>
<evidence type="ECO:0000303" key="5">
    <source>
    </source>
</evidence>
<evidence type="ECO:0000305" key="6"/>
<evidence type="ECO:0000312" key="7">
    <source>
        <dbReference type="EMBL" id="CAD51591.1"/>
    </source>
</evidence>
<evidence type="ECO:0000312" key="8">
    <source>
        <dbReference type="Proteomes" id="UP000001450"/>
    </source>
</evidence>
<feature type="signal peptide" evidence="3">
    <location>
        <begin position="1"/>
        <end position="18"/>
    </location>
</feature>
<feature type="chain" id="PRO_0000459593" description="Iron-sulfur cluster assembly protein SufA">
    <location>
        <begin position="19"/>
        <end position="177"/>
    </location>
</feature>
<feature type="binding site" description="sulfuration is probably achieved via an internal sulfur transfer from C-169 or C-171" evidence="2">
    <location>
        <position position="101"/>
    </location>
    <ligand>
        <name>[4Fe-4S] cluster</name>
        <dbReference type="ChEBI" id="CHEBI:49883"/>
    </ligand>
</feature>
<feature type="binding site" evidence="2">
    <location>
        <position position="169"/>
    </location>
    <ligand>
        <name>[4Fe-4S] cluster</name>
        <dbReference type="ChEBI" id="CHEBI:49883"/>
    </ligand>
</feature>
<feature type="binding site" evidence="2">
    <location>
        <position position="171"/>
    </location>
    <ligand>
        <name>[4Fe-4S] cluster</name>
        <dbReference type="ChEBI" id="CHEBI:49883"/>
    </ligand>
</feature>
<name>SUFA_PLAF7</name>
<protein>
    <recommendedName>
        <fullName evidence="6">Iron-sulfur cluster assembly protein SufA</fullName>
        <shortName evidence="5">PfSufA</shortName>
    </recommendedName>
</protein>
<sequence length="177" mass="20528">MTIHIFLCFLLILKIVNALKSNRFSSYIYTPKTFLYNNKSIPNKKLVRKFVNRIKLVDDTIKSNEHIIKITDNATNKIKELQKECNDDYLILKLYVENGGCKGLKYKLNPIKKNEIEEDDYIQQFDELKFILSIDSTSVIYIYNNTLDYSNDLISGGFKFINPNATKKCGCGKSFNV</sequence>
<gene>
    <name evidence="5" type="primary">SufA</name>
    <name evidence="7" type="ORF">PF3D7_0522700</name>
</gene>
<organism evidence="8">
    <name type="scientific">Plasmodium falciparum (isolate 3D7)</name>
    <dbReference type="NCBI Taxonomy" id="36329"/>
    <lineage>
        <taxon>Eukaryota</taxon>
        <taxon>Sar</taxon>
        <taxon>Alveolata</taxon>
        <taxon>Apicomplexa</taxon>
        <taxon>Aconoidasida</taxon>
        <taxon>Haemosporida</taxon>
        <taxon>Plasmodiidae</taxon>
        <taxon>Plasmodium</taxon>
        <taxon>Plasmodium (Laverania)</taxon>
    </lineage>
</organism>